<comment type="function">
    <text evidence="1">Catalyzes the conversion of 3-deoxy-D-arabino-heptulosonate 7-phosphate (DAHP) to dehydroquinate (DHQ).</text>
</comment>
<comment type="catalytic activity">
    <reaction evidence="1">
        <text>7-phospho-2-dehydro-3-deoxy-D-arabino-heptonate = 3-dehydroquinate + phosphate</text>
        <dbReference type="Rhea" id="RHEA:21968"/>
        <dbReference type="ChEBI" id="CHEBI:32364"/>
        <dbReference type="ChEBI" id="CHEBI:43474"/>
        <dbReference type="ChEBI" id="CHEBI:58394"/>
        <dbReference type="EC" id="4.2.3.4"/>
    </reaction>
</comment>
<comment type="cofactor">
    <cofactor evidence="1">
        <name>Co(2+)</name>
        <dbReference type="ChEBI" id="CHEBI:48828"/>
    </cofactor>
    <cofactor evidence="1">
        <name>Zn(2+)</name>
        <dbReference type="ChEBI" id="CHEBI:29105"/>
    </cofactor>
    <text evidence="1">Binds 1 divalent metal cation per subunit. Can use either Co(2+) or Zn(2+).</text>
</comment>
<comment type="cofactor">
    <cofactor evidence="1">
        <name>NAD(+)</name>
        <dbReference type="ChEBI" id="CHEBI:57540"/>
    </cofactor>
</comment>
<comment type="pathway">
    <text evidence="1">Metabolic intermediate biosynthesis; chorismate biosynthesis; chorismate from D-erythrose 4-phosphate and phosphoenolpyruvate: step 2/7.</text>
</comment>
<comment type="subcellular location">
    <subcellularLocation>
        <location evidence="1">Cytoplasm</location>
    </subcellularLocation>
</comment>
<comment type="similarity">
    <text evidence="1">Belongs to the sugar phosphate cyclases superfamily. Dehydroquinate synthase family.</text>
</comment>
<accession>B6I2U7</accession>
<keyword id="KW-0028">Amino-acid biosynthesis</keyword>
<keyword id="KW-0057">Aromatic amino acid biosynthesis</keyword>
<keyword id="KW-0170">Cobalt</keyword>
<keyword id="KW-0963">Cytoplasm</keyword>
<keyword id="KW-0456">Lyase</keyword>
<keyword id="KW-0479">Metal-binding</keyword>
<keyword id="KW-0520">NAD</keyword>
<keyword id="KW-0547">Nucleotide-binding</keyword>
<keyword id="KW-0862">Zinc</keyword>
<name>AROB_ECOSE</name>
<feature type="chain" id="PRO_1000094512" description="3-dehydroquinate synthase">
    <location>
        <begin position="1"/>
        <end position="362"/>
    </location>
</feature>
<feature type="binding site" evidence="1">
    <location>
        <begin position="71"/>
        <end position="76"/>
    </location>
    <ligand>
        <name>NAD(+)</name>
        <dbReference type="ChEBI" id="CHEBI:57540"/>
    </ligand>
</feature>
<feature type="binding site" evidence="1">
    <location>
        <begin position="105"/>
        <end position="109"/>
    </location>
    <ligand>
        <name>NAD(+)</name>
        <dbReference type="ChEBI" id="CHEBI:57540"/>
    </ligand>
</feature>
<feature type="binding site" evidence="1">
    <location>
        <begin position="129"/>
        <end position="130"/>
    </location>
    <ligand>
        <name>NAD(+)</name>
        <dbReference type="ChEBI" id="CHEBI:57540"/>
    </ligand>
</feature>
<feature type="binding site" evidence="1">
    <location>
        <position position="142"/>
    </location>
    <ligand>
        <name>NAD(+)</name>
        <dbReference type="ChEBI" id="CHEBI:57540"/>
    </ligand>
</feature>
<feature type="binding site" evidence="1">
    <location>
        <position position="151"/>
    </location>
    <ligand>
        <name>NAD(+)</name>
        <dbReference type="ChEBI" id="CHEBI:57540"/>
    </ligand>
</feature>
<feature type="binding site" evidence="1">
    <location>
        <begin position="169"/>
        <end position="172"/>
    </location>
    <ligand>
        <name>NAD(+)</name>
        <dbReference type="ChEBI" id="CHEBI:57540"/>
    </ligand>
</feature>
<feature type="binding site" evidence="1">
    <location>
        <position position="184"/>
    </location>
    <ligand>
        <name>Zn(2+)</name>
        <dbReference type="ChEBI" id="CHEBI:29105"/>
    </ligand>
</feature>
<feature type="binding site" evidence="1">
    <location>
        <position position="247"/>
    </location>
    <ligand>
        <name>Zn(2+)</name>
        <dbReference type="ChEBI" id="CHEBI:29105"/>
    </ligand>
</feature>
<feature type="binding site" evidence="1">
    <location>
        <position position="264"/>
    </location>
    <ligand>
        <name>Zn(2+)</name>
        <dbReference type="ChEBI" id="CHEBI:29105"/>
    </ligand>
</feature>
<sequence length="362" mass="38863">MERIVVTLGERSYPITIASGLFNEPASFLPLKSGEQVMLVTNETLAPLYLDKVRGVLEQAGVNVDSVILPDGEQYKSLAVLDTVFTALLQKPHGRDTTLVALGGGVVGDLTGFAAASYQRGVRFIQVPTTLLSQVDSSVGGKTAVNHPLGKNMIGAFYQPASVVVDLDCLKTLPPRELASGLAEVIKYGIILDGAFFNWLEENLDALLRLDGPAMAYCIRRCCELKAEVVAADERETGLRALLNLGHTFGHAIEAEMGYGNWLHGEAVAAGMVMAARTSERLGQFSSAETQRIITLLKRAGLPVNGPREMSAQAYLPHMLRDKKVLAGEIRLILPLAIGKSEVRSGVSHELVLNAIADCQSA</sequence>
<proteinExistence type="inferred from homology"/>
<reference key="1">
    <citation type="journal article" date="2008" name="DNA Res.">
        <title>Complete genome sequence and comparative analysis of the wild-type commensal Escherichia coli strain SE11 isolated from a healthy adult.</title>
        <authorList>
            <person name="Oshima K."/>
            <person name="Toh H."/>
            <person name="Ogura Y."/>
            <person name="Sasamoto H."/>
            <person name="Morita H."/>
            <person name="Park S.-H."/>
            <person name="Ooka T."/>
            <person name="Iyoda S."/>
            <person name="Taylor T.D."/>
            <person name="Hayashi T."/>
            <person name="Itoh K."/>
            <person name="Hattori M."/>
        </authorList>
    </citation>
    <scope>NUCLEOTIDE SEQUENCE [LARGE SCALE GENOMIC DNA]</scope>
    <source>
        <strain>SE11</strain>
    </source>
</reference>
<protein>
    <recommendedName>
        <fullName evidence="1">3-dehydroquinate synthase</fullName>
        <shortName evidence="1">DHQS</shortName>
        <ecNumber evidence="1">4.2.3.4</ecNumber>
    </recommendedName>
</protein>
<dbReference type="EC" id="4.2.3.4" evidence="1"/>
<dbReference type="EMBL" id="AP009240">
    <property type="protein sequence ID" value="BAG79174.1"/>
    <property type="molecule type" value="Genomic_DNA"/>
</dbReference>
<dbReference type="RefSeq" id="WP_000439846.1">
    <property type="nucleotide sequence ID" value="NC_011415.1"/>
</dbReference>
<dbReference type="SMR" id="B6I2U7"/>
<dbReference type="GeneID" id="93778609"/>
<dbReference type="KEGG" id="ecy:ECSE_3650"/>
<dbReference type="HOGENOM" id="CLU_001201_0_2_6"/>
<dbReference type="UniPathway" id="UPA00053">
    <property type="reaction ID" value="UER00085"/>
</dbReference>
<dbReference type="Proteomes" id="UP000008199">
    <property type="component" value="Chromosome"/>
</dbReference>
<dbReference type="GO" id="GO:0005737">
    <property type="term" value="C:cytoplasm"/>
    <property type="evidence" value="ECO:0007669"/>
    <property type="project" value="UniProtKB-SubCell"/>
</dbReference>
<dbReference type="GO" id="GO:0003856">
    <property type="term" value="F:3-dehydroquinate synthase activity"/>
    <property type="evidence" value="ECO:0007669"/>
    <property type="project" value="UniProtKB-UniRule"/>
</dbReference>
<dbReference type="GO" id="GO:0046872">
    <property type="term" value="F:metal ion binding"/>
    <property type="evidence" value="ECO:0007669"/>
    <property type="project" value="UniProtKB-KW"/>
</dbReference>
<dbReference type="GO" id="GO:0000166">
    <property type="term" value="F:nucleotide binding"/>
    <property type="evidence" value="ECO:0007669"/>
    <property type="project" value="UniProtKB-KW"/>
</dbReference>
<dbReference type="GO" id="GO:0008652">
    <property type="term" value="P:amino acid biosynthetic process"/>
    <property type="evidence" value="ECO:0007669"/>
    <property type="project" value="UniProtKB-KW"/>
</dbReference>
<dbReference type="GO" id="GO:0009073">
    <property type="term" value="P:aromatic amino acid family biosynthetic process"/>
    <property type="evidence" value="ECO:0007669"/>
    <property type="project" value="UniProtKB-KW"/>
</dbReference>
<dbReference type="GO" id="GO:0009423">
    <property type="term" value="P:chorismate biosynthetic process"/>
    <property type="evidence" value="ECO:0007669"/>
    <property type="project" value="UniProtKB-UniRule"/>
</dbReference>
<dbReference type="CDD" id="cd08195">
    <property type="entry name" value="DHQS"/>
    <property type="match status" value="1"/>
</dbReference>
<dbReference type="FunFam" id="1.20.1090.10:FF:000002">
    <property type="entry name" value="3-dehydroquinate synthase"/>
    <property type="match status" value="1"/>
</dbReference>
<dbReference type="FunFam" id="3.40.50.1970:FF:000001">
    <property type="entry name" value="3-dehydroquinate synthase"/>
    <property type="match status" value="1"/>
</dbReference>
<dbReference type="Gene3D" id="3.40.50.1970">
    <property type="match status" value="1"/>
</dbReference>
<dbReference type="Gene3D" id="1.20.1090.10">
    <property type="entry name" value="Dehydroquinate synthase-like - alpha domain"/>
    <property type="match status" value="1"/>
</dbReference>
<dbReference type="HAMAP" id="MF_00110">
    <property type="entry name" value="DHQ_synthase"/>
    <property type="match status" value="1"/>
</dbReference>
<dbReference type="InterPro" id="IPR050071">
    <property type="entry name" value="Dehydroquinate_synthase"/>
</dbReference>
<dbReference type="InterPro" id="IPR016037">
    <property type="entry name" value="DHQ_synth_AroB"/>
</dbReference>
<dbReference type="InterPro" id="IPR030963">
    <property type="entry name" value="DHQ_synth_fam"/>
</dbReference>
<dbReference type="InterPro" id="IPR030960">
    <property type="entry name" value="DHQS/DOIS_N"/>
</dbReference>
<dbReference type="InterPro" id="IPR056179">
    <property type="entry name" value="DHQS_C"/>
</dbReference>
<dbReference type="NCBIfam" id="TIGR01357">
    <property type="entry name" value="aroB"/>
    <property type="match status" value="1"/>
</dbReference>
<dbReference type="PANTHER" id="PTHR43622">
    <property type="entry name" value="3-DEHYDROQUINATE SYNTHASE"/>
    <property type="match status" value="1"/>
</dbReference>
<dbReference type="PANTHER" id="PTHR43622:SF7">
    <property type="entry name" value="3-DEHYDROQUINATE SYNTHASE, CHLOROPLASTIC"/>
    <property type="match status" value="1"/>
</dbReference>
<dbReference type="Pfam" id="PF01761">
    <property type="entry name" value="DHQ_synthase"/>
    <property type="match status" value="1"/>
</dbReference>
<dbReference type="Pfam" id="PF24621">
    <property type="entry name" value="DHQS_C"/>
    <property type="match status" value="1"/>
</dbReference>
<dbReference type="PIRSF" id="PIRSF001455">
    <property type="entry name" value="DHQ_synth"/>
    <property type="match status" value="1"/>
</dbReference>
<dbReference type="SUPFAM" id="SSF56796">
    <property type="entry name" value="Dehydroquinate synthase-like"/>
    <property type="match status" value="1"/>
</dbReference>
<evidence type="ECO:0000255" key="1">
    <source>
        <dbReference type="HAMAP-Rule" id="MF_00110"/>
    </source>
</evidence>
<organism>
    <name type="scientific">Escherichia coli (strain SE11)</name>
    <dbReference type="NCBI Taxonomy" id="409438"/>
    <lineage>
        <taxon>Bacteria</taxon>
        <taxon>Pseudomonadati</taxon>
        <taxon>Pseudomonadota</taxon>
        <taxon>Gammaproteobacteria</taxon>
        <taxon>Enterobacterales</taxon>
        <taxon>Enterobacteriaceae</taxon>
        <taxon>Escherichia</taxon>
    </lineage>
</organism>
<gene>
    <name evidence="1" type="primary">aroB</name>
    <name type="ordered locus">ECSE_3650</name>
</gene>